<sequence>MSSKELFELAAKLFPMGVNSPVRYFKDYPFYVKEGKGSTILDVDGNKYIDYCLGYGPLILGHSDPDVTRAVIEQAEKGLLFGEPSENEIKLAEMIKETSKNIEMMRFTNSGTEATMHAIRLARAITGRKLIVKMEGGFHGAHDYSLIKSGSGTLTFGSPSSPGIPDEVAQTVIVGKYNDENNIKEIFQKYGDKIAAVITEPIMGNAGVILPKQGFLEFLRDITQKHGSLLIFDEVITGYRFAFSPFQDIMRIDPDITTMGKIIGGGLPIGLFGGSEEIMKNISPSGNVYEAGTFSGNPMSMAAGYAAMEKLSKQDYSILKKRTQKLVSGIDDILDRKHITHTIKYYGTMFQVFFADHVNNYDDALKARKEVYFKLFKALSKNGVYLPPSQYETNFVSFAHSDSDIDATLAAFEKAVAEMD</sequence>
<keyword id="KW-0963">Cytoplasm</keyword>
<keyword id="KW-0413">Isomerase</keyword>
<keyword id="KW-0627">Porphyrin biosynthesis</keyword>
<keyword id="KW-0663">Pyridoxal phosphate</keyword>
<reference key="1">
    <citation type="journal article" date="2000" name="Proc. Natl. Acad. Sci. U.S.A.">
        <title>Archaeal adaptation to higher temperatures revealed by genomic sequence of Thermoplasma volcanium.</title>
        <authorList>
            <person name="Kawashima T."/>
            <person name="Amano N."/>
            <person name="Koike H."/>
            <person name="Makino S."/>
            <person name="Higuchi S."/>
            <person name="Kawashima-Ohya Y."/>
            <person name="Watanabe K."/>
            <person name="Yamazaki M."/>
            <person name="Kanehori K."/>
            <person name="Kawamoto T."/>
            <person name="Nunoshiba T."/>
            <person name="Yamamoto Y."/>
            <person name="Aramaki H."/>
            <person name="Makino K."/>
            <person name="Suzuki M."/>
        </authorList>
    </citation>
    <scope>NUCLEOTIDE SEQUENCE [LARGE SCALE GENOMIC DNA]</scope>
    <source>
        <strain>ATCC 51530 / DSM 4299 / JCM 9571 / NBRC 15438 / GSS1</strain>
    </source>
</reference>
<dbReference type="EC" id="5.4.3.8" evidence="1"/>
<dbReference type="EMBL" id="BA000011">
    <property type="protein sequence ID" value="BAB59776.1"/>
    <property type="molecule type" value="Genomic_DNA"/>
</dbReference>
<dbReference type="RefSeq" id="WP_010916893.1">
    <property type="nucleotide sequence ID" value="NC_002689.2"/>
</dbReference>
<dbReference type="SMR" id="Q97B25"/>
<dbReference type="STRING" id="273116.gene:9381422"/>
<dbReference type="PaxDb" id="273116-14324850"/>
<dbReference type="GeneID" id="1441741"/>
<dbReference type="KEGG" id="tvo:TVG0626624"/>
<dbReference type="eggNOG" id="arCOG00918">
    <property type="taxonomic scope" value="Archaea"/>
</dbReference>
<dbReference type="HOGENOM" id="CLU_016922_1_5_2"/>
<dbReference type="OrthoDB" id="6524at2157"/>
<dbReference type="PhylomeDB" id="Q97B25"/>
<dbReference type="UniPathway" id="UPA00251">
    <property type="reaction ID" value="UER00317"/>
</dbReference>
<dbReference type="Proteomes" id="UP000001017">
    <property type="component" value="Chromosome"/>
</dbReference>
<dbReference type="GO" id="GO:0005737">
    <property type="term" value="C:cytoplasm"/>
    <property type="evidence" value="ECO:0007669"/>
    <property type="project" value="UniProtKB-SubCell"/>
</dbReference>
<dbReference type="GO" id="GO:0042286">
    <property type="term" value="F:glutamate-1-semialdehyde 2,1-aminomutase activity"/>
    <property type="evidence" value="ECO:0007669"/>
    <property type="project" value="UniProtKB-UniRule"/>
</dbReference>
<dbReference type="GO" id="GO:0030170">
    <property type="term" value="F:pyridoxal phosphate binding"/>
    <property type="evidence" value="ECO:0007669"/>
    <property type="project" value="InterPro"/>
</dbReference>
<dbReference type="GO" id="GO:0008483">
    <property type="term" value="F:transaminase activity"/>
    <property type="evidence" value="ECO:0007669"/>
    <property type="project" value="InterPro"/>
</dbReference>
<dbReference type="GO" id="GO:0006782">
    <property type="term" value="P:protoporphyrinogen IX biosynthetic process"/>
    <property type="evidence" value="ECO:0007669"/>
    <property type="project" value="UniProtKB-UniRule"/>
</dbReference>
<dbReference type="CDD" id="cd00610">
    <property type="entry name" value="OAT_like"/>
    <property type="match status" value="1"/>
</dbReference>
<dbReference type="FunFam" id="3.40.640.10:FF:000021">
    <property type="entry name" value="Glutamate-1-semialdehyde 2,1-aminomutase"/>
    <property type="match status" value="1"/>
</dbReference>
<dbReference type="Gene3D" id="3.90.1150.10">
    <property type="entry name" value="Aspartate Aminotransferase, domain 1"/>
    <property type="match status" value="1"/>
</dbReference>
<dbReference type="Gene3D" id="3.40.640.10">
    <property type="entry name" value="Type I PLP-dependent aspartate aminotransferase-like (Major domain)"/>
    <property type="match status" value="1"/>
</dbReference>
<dbReference type="HAMAP" id="MF_00375">
    <property type="entry name" value="HemL_aminotrans_3"/>
    <property type="match status" value="1"/>
</dbReference>
<dbReference type="InterPro" id="IPR004639">
    <property type="entry name" value="4pyrrol_synth_GluAld_NH2Trfase"/>
</dbReference>
<dbReference type="InterPro" id="IPR005814">
    <property type="entry name" value="Aminotrans_3"/>
</dbReference>
<dbReference type="InterPro" id="IPR049704">
    <property type="entry name" value="Aminotrans_3_PPA_site"/>
</dbReference>
<dbReference type="InterPro" id="IPR015424">
    <property type="entry name" value="PyrdxlP-dep_Trfase"/>
</dbReference>
<dbReference type="InterPro" id="IPR015421">
    <property type="entry name" value="PyrdxlP-dep_Trfase_major"/>
</dbReference>
<dbReference type="InterPro" id="IPR015422">
    <property type="entry name" value="PyrdxlP-dep_Trfase_small"/>
</dbReference>
<dbReference type="NCBIfam" id="TIGR00713">
    <property type="entry name" value="hemL"/>
    <property type="match status" value="1"/>
</dbReference>
<dbReference type="NCBIfam" id="NF000818">
    <property type="entry name" value="PRK00062.1"/>
    <property type="match status" value="1"/>
</dbReference>
<dbReference type="PANTHER" id="PTHR43713">
    <property type="entry name" value="GLUTAMATE-1-SEMIALDEHYDE 2,1-AMINOMUTASE"/>
    <property type="match status" value="1"/>
</dbReference>
<dbReference type="PANTHER" id="PTHR43713:SF3">
    <property type="entry name" value="GLUTAMATE-1-SEMIALDEHYDE 2,1-AMINOMUTASE 1, CHLOROPLASTIC-RELATED"/>
    <property type="match status" value="1"/>
</dbReference>
<dbReference type="Pfam" id="PF00202">
    <property type="entry name" value="Aminotran_3"/>
    <property type="match status" value="1"/>
</dbReference>
<dbReference type="SUPFAM" id="SSF53383">
    <property type="entry name" value="PLP-dependent transferases"/>
    <property type="match status" value="1"/>
</dbReference>
<dbReference type="PROSITE" id="PS00600">
    <property type="entry name" value="AA_TRANSFER_CLASS_3"/>
    <property type="match status" value="1"/>
</dbReference>
<protein>
    <recommendedName>
        <fullName evidence="1">Glutamate-1-semialdehyde 2,1-aminomutase</fullName>
        <shortName evidence="1">GSA</shortName>
        <ecNumber evidence="1">5.4.3.8</ecNumber>
    </recommendedName>
    <alternativeName>
        <fullName evidence="1">Glutamate-1-semialdehyde aminotransferase</fullName>
        <shortName evidence="1">GSA-AT</shortName>
    </alternativeName>
</protein>
<proteinExistence type="inferred from homology"/>
<evidence type="ECO:0000255" key="1">
    <source>
        <dbReference type="HAMAP-Rule" id="MF_00375"/>
    </source>
</evidence>
<comment type="catalytic activity">
    <reaction evidence="1">
        <text>(S)-4-amino-5-oxopentanoate = 5-aminolevulinate</text>
        <dbReference type="Rhea" id="RHEA:14265"/>
        <dbReference type="ChEBI" id="CHEBI:57501"/>
        <dbReference type="ChEBI" id="CHEBI:356416"/>
        <dbReference type="EC" id="5.4.3.8"/>
    </reaction>
</comment>
<comment type="cofactor">
    <cofactor evidence="1">
        <name>pyridoxal 5'-phosphate</name>
        <dbReference type="ChEBI" id="CHEBI:597326"/>
    </cofactor>
</comment>
<comment type="pathway">
    <text evidence="1">Porphyrin-containing compound metabolism; protoporphyrin-IX biosynthesis; 5-aminolevulinate from L-glutamyl-tRNA(Glu): step 2/2.</text>
</comment>
<comment type="subcellular location">
    <subcellularLocation>
        <location evidence="1">Cytoplasm</location>
    </subcellularLocation>
</comment>
<comment type="similarity">
    <text evidence="1">Belongs to the class-III pyridoxal-phosphate-dependent aminotransferase family. HemL subfamily.</text>
</comment>
<name>GSA_THEVO</name>
<gene>
    <name evidence="1" type="primary">hemL</name>
    <name type="ordered locus">TV0634</name>
    <name type="ORF">TVG0626624</name>
</gene>
<accession>Q97B25</accession>
<feature type="chain" id="PRO_0000120493" description="Glutamate-1-semialdehyde 2,1-aminomutase">
    <location>
        <begin position="1"/>
        <end position="420"/>
    </location>
</feature>
<feature type="modified residue" description="N6-(pyridoxal phosphate)lysine" evidence="1">
    <location>
        <position position="261"/>
    </location>
</feature>
<organism>
    <name type="scientific">Thermoplasma volcanium (strain ATCC 51530 / DSM 4299 / JCM 9571 / NBRC 15438 / GSS1)</name>
    <dbReference type="NCBI Taxonomy" id="273116"/>
    <lineage>
        <taxon>Archaea</taxon>
        <taxon>Methanobacteriati</taxon>
        <taxon>Thermoplasmatota</taxon>
        <taxon>Thermoplasmata</taxon>
        <taxon>Thermoplasmatales</taxon>
        <taxon>Thermoplasmataceae</taxon>
        <taxon>Thermoplasma</taxon>
    </lineage>
</organism>